<sequence length="299" mass="32839">MTILDGKKISNDIKDEIAGEVTKIKKRGEKVPHLAAIIVGKDGASMTYVNSKVKACERVGFESSLFRLPHTVSELELLDKIEELNENDDIDGFIVQLPLPPQINTQKVLNAVDPDKDVDGFHPTNFGKMALDMTSFIPATPFGILELLERYDIPTKGKHTVVIGRSYIVGRPMSILMGRSGFPGNSTVTLTHEFTKNITQVTSQADIIIIAVGIPDFLKGEMIKDDAVIIDVGITRVPDDHAERGYVIKGDVDFENVSKRASFITPVPGGVGPMTVSMLLKNTLLARERHHKRAVDAKK</sequence>
<gene>
    <name evidence="1" type="primary">folD</name>
    <name type="ordered locus">GFO_2795</name>
</gene>
<feature type="chain" id="PRO_0000305821" description="Bifunctional protein FolD">
    <location>
        <begin position="1"/>
        <end position="299"/>
    </location>
</feature>
<feature type="binding site" evidence="1">
    <location>
        <begin position="164"/>
        <end position="166"/>
    </location>
    <ligand>
        <name>NADP(+)</name>
        <dbReference type="ChEBI" id="CHEBI:58349"/>
    </ligand>
</feature>
<feature type="binding site" evidence="1">
    <location>
        <position position="234"/>
    </location>
    <ligand>
        <name>NADP(+)</name>
        <dbReference type="ChEBI" id="CHEBI:58349"/>
    </ligand>
</feature>
<accession>A0M554</accession>
<protein>
    <recommendedName>
        <fullName evidence="1">Bifunctional protein FolD</fullName>
    </recommendedName>
    <domain>
        <recommendedName>
            <fullName evidence="1">Methylenetetrahydrofolate dehydrogenase</fullName>
            <ecNumber evidence="1">1.5.1.5</ecNumber>
        </recommendedName>
    </domain>
    <domain>
        <recommendedName>
            <fullName evidence="1">Methenyltetrahydrofolate cyclohydrolase</fullName>
            <ecNumber evidence="1">3.5.4.9</ecNumber>
        </recommendedName>
    </domain>
</protein>
<organism>
    <name type="scientific">Christiangramia forsetii (strain DSM 17595 / CGMCC 1.15422 / KT0803)</name>
    <name type="common">Gramella forsetii</name>
    <dbReference type="NCBI Taxonomy" id="411154"/>
    <lineage>
        <taxon>Bacteria</taxon>
        <taxon>Pseudomonadati</taxon>
        <taxon>Bacteroidota</taxon>
        <taxon>Flavobacteriia</taxon>
        <taxon>Flavobacteriales</taxon>
        <taxon>Flavobacteriaceae</taxon>
        <taxon>Christiangramia</taxon>
    </lineage>
</organism>
<keyword id="KW-0028">Amino-acid biosynthesis</keyword>
<keyword id="KW-0368">Histidine biosynthesis</keyword>
<keyword id="KW-0378">Hydrolase</keyword>
<keyword id="KW-0486">Methionine biosynthesis</keyword>
<keyword id="KW-0511">Multifunctional enzyme</keyword>
<keyword id="KW-0521">NADP</keyword>
<keyword id="KW-0554">One-carbon metabolism</keyword>
<keyword id="KW-0560">Oxidoreductase</keyword>
<keyword id="KW-0658">Purine biosynthesis</keyword>
<name>FOLD_CHRFK</name>
<reference key="1">
    <citation type="journal article" date="2006" name="Environ. Microbiol.">
        <title>Whole genome analysis of the marine Bacteroidetes'Gramella forsetii' reveals adaptations to degradation of polymeric organic matter.</title>
        <authorList>
            <person name="Bauer M."/>
            <person name="Kube M."/>
            <person name="Teeling H."/>
            <person name="Richter M."/>
            <person name="Lombardot T."/>
            <person name="Allers E."/>
            <person name="Wuerdemann C.A."/>
            <person name="Quast C."/>
            <person name="Kuhl H."/>
            <person name="Knaust F."/>
            <person name="Woebken D."/>
            <person name="Bischof K."/>
            <person name="Mussmann M."/>
            <person name="Choudhuri J.V."/>
            <person name="Meyer F."/>
            <person name="Reinhardt R."/>
            <person name="Amann R.I."/>
            <person name="Gloeckner F.O."/>
        </authorList>
    </citation>
    <scope>NUCLEOTIDE SEQUENCE [LARGE SCALE GENOMIC DNA]</scope>
    <source>
        <strain>DSM 17595 / CGMCC 1.15422 / KT0803</strain>
    </source>
</reference>
<comment type="function">
    <text evidence="1">Catalyzes the oxidation of 5,10-methylenetetrahydrofolate to 5,10-methenyltetrahydrofolate and then the hydrolysis of 5,10-methenyltetrahydrofolate to 10-formyltetrahydrofolate.</text>
</comment>
<comment type="catalytic activity">
    <reaction evidence="1">
        <text>(6R)-5,10-methylene-5,6,7,8-tetrahydrofolate + NADP(+) = (6R)-5,10-methenyltetrahydrofolate + NADPH</text>
        <dbReference type="Rhea" id="RHEA:22812"/>
        <dbReference type="ChEBI" id="CHEBI:15636"/>
        <dbReference type="ChEBI" id="CHEBI:57455"/>
        <dbReference type="ChEBI" id="CHEBI:57783"/>
        <dbReference type="ChEBI" id="CHEBI:58349"/>
        <dbReference type="EC" id="1.5.1.5"/>
    </reaction>
</comment>
<comment type="catalytic activity">
    <reaction evidence="1">
        <text>(6R)-5,10-methenyltetrahydrofolate + H2O = (6R)-10-formyltetrahydrofolate + H(+)</text>
        <dbReference type="Rhea" id="RHEA:23700"/>
        <dbReference type="ChEBI" id="CHEBI:15377"/>
        <dbReference type="ChEBI" id="CHEBI:15378"/>
        <dbReference type="ChEBI" id="CHEBI:57455"/>
        <dbReference type="ChEBI" id="CHEBI:195366"/>
        <dbReference type="EC" id="3.5.4.9"/>
    </reaction>
</comment>
<comment type="pathway">
    <text evidence="1">One-carbon metabolism; tetrahydrofolate interconversion.</text>
</comment>
<comment type="subunit">
    <text evidence="1">Homodimer.</text>
</comment>
<comment type="similarity">
    <text evidence="1">Belongs to the tetrahydrofolate dehydrogenase/cyclohydrolase family.</text>
</comment>
<proteinExistence type="inferred from homology"/>
<evidence type="ECO:0000255" key="1">
    <source>
        <dbReference type="HAMAP-Rule" id="MF_01576"/>
    </source>
</evidence>
<dbReference type="EC" id="1.5.1.5" evidence="1"/>
<dbReference type="EC" id="3.5.4.9" evidence="1"/>
<dbReference type="EMBL" id="CU207366">
    <property type="protein sequence ID" value="CAL67749.1"/>
    <property type="molecule type" value="Genomic_DNA"/>
</dbReference>
<dbReference type="RefSeq" id="WP_011710652.1">
    <property type="nucleotide sequence ID" value="NC_008571.1"/>
</dbReference>
<dbReference type="SMR" id="A0M554"/>
<dbReference type="STRING" id="411154.GFO_2795"/>
<dbReference type="KEGG" id="gfo:GFO_2795"/>
<dbReference type="eggNOG" id="COG0190">
    <property type="taxonomic scope" value="Bacteria"/>
</dbReference>
<dbReference type="HOGENOM" id="CLU_034045_2_1_10"/>
<dbReference type="OrthoDB" id="9803580at2"/>
<dbReference type="UniPathway" id="UPA00193"/>
<dbReference type="Proteomes" id="UP000000755">
    <property type="component" value="Chromosome"/>
</dbReference>
<dbReference type="GO" id="GO:0005829">
    <property type="term" value="C:cytosol"/>
    <property type="evidence" value="ECO:0007669"/>
    <property type="project" value="TreeGrafter"/>
</dbReference>
<dbReference type="GO" id="GO:0004477">
    <property type="term" value="F:methenyltetrahydrofolate cyclohydrolase activity"/>
    <property type="evidence" value="ECO:0007669"/>
    <property type="project" value="UniProtKB-UniRule"/>
</dbReference>
<dbReference type="GO" id="GO:0004488">
    <property type="term" value="F:methylenetetrahydrofolate dehydrogenase (NADP+) activity"/>
    <property type="evidence" value="ECO:0007669"/>
    <property type="project" value="UniProtKB-UniRule"/>
</dbReference>
<dbReference type="GO" id="GO:0000105">
    <property type="term" value="P:L-histidine biosynthetic process"/>
    <property type="evidence" value="ECO:0007669"/>
    <property type="project" value="UniProtKB-KW"/>
</dbReference>
<dbReference type="GO" id="GO:0009086">
    <property type="term" value="P:methionine biosynthetic process"/>
    <property type="evidence" value="ECO:0007669"/>
    <property type="project" value="UniProtKB-KW"/>
</dbReference>
<dbReference type="GO" id="GO:0006164">
    <property type="term" value="P:purine nucleotide biosynthetic process"/>
    <property type="evidence" value="ECO:0007669"/>
    <property type="project" value="UniProtKB-KW"/>
</dbReference>
<dbReference type="GO" id="GO:0035999">
    <property type="term" value="P:tetrahydrofolate interconversion"/>
    <property type="evidence" value="ECO:0007669"/>
    <property type="project" value="UniProtKB-UniRule"/>
</dbReference>
<dbReference type="CDD" id="cd01080">
    <property type="entry name" value="NAD_bind_m-THF_DH_Cyclohyd"/>
    <property type="match status" value="1"/>
</dbReference>
<dbReference type="FunFam" id="3.40.50.720:FF:000189">
    <property type="entry name" value="Bifunctional protein FolD"/>
    <property type="match status" value="1"/>
</dbReference>
<dbReference type="FunFam" id="3.40.50.10860:FF:000005">
    <property type="entry name" value="C-1-tetrahydrofolate synthase, cytoplasmic, putative"/>
    <property type="match status" value="1"/>
</dbReference>
<dbReference type="Gene3D" id="3.40.50.10860">
    <property type="entry name" value="Leucine Dehydrogenase, chain A, domain 1"/>
    <property type="match status" value="1"/>
</dbReference>
<dbReference type="Gene3D" id="3.40.50.720">
    <property type="entry name" value="NAD(P)-binding Rossmann-like Domain"/>
    <property type="match status" value="1"/>
</dbReference>
<dbReference type="HAMAP" id="MF_01576">
    <property type="entry name" value="THF_DHG_CYH"/>
    <property type="match status" value="1"/>
</dbReference>
<dbReference type="InterPro" id="IPR046346">
    <property type="entry name" value="Aminoacid_DH-like_N_sf"/>
</dbReference>
<dbReference type="InterPro" id="IPR036291">
    <property type="entry name" value="NAD(P)-bd_dom_sf"/>
</dbReference>
<dbReference type="InterPro" id="IPR000672">
    <property type="entry name" value="THF_DH/CycHdrlase"/>
</dbReference>
<dbReference type="InterPro" id="IPR020630">
    <property type="entry name" value="THF_DH/CycHdrlase_cat_dom"/>
</dbReference>
<dbReference type="InterPro" id="IPR020867">
    <property type="entry name" value="THF_DH/CycHdrlase_CS"/>
</dbReference>
<dbReference type="InterPro" id="IPR020631">
    <property type="entry name" value="THF_DH/CycHdrlase_NAD-bd_dom"/>
</dbReference>
<dbReference type="PANTHER" id="PTHR48099:SF5">
    <property type="entry name" value="C-1-TETRAHYDROFOLATE SYNTHASE, CYTOPLASMIC"/>
    <property type="match status" value="1"/>
</dbReference>
<dbReference type="PANTHER" id="PTHR48099">
    <property type="entry name" value="C-1-TETRAHYDROFOLATE SYNTHASE, CYTOPLASMIC-RELATED"/>
    <property type="match status" value="1"/>
</dbReference>
<dbReference type="Pfam" id="PF00763">
    <property type="entry name" value="THF_DHG_CYH"/>
    <property type="match status" value="1"/>
</dbReference>
<dbReference type="Pfam" id="PF02882">
    <property type="entry name" value="THF_DHG_CYH_C"/>
    <property type="match status" value="1"/>
</dbReference>
<dbReference type="PRINTS" id="PR00085">
    <property type="entry name" value="THFDHDRGNASE"/>
</dbReference>
<dbReference type="SUPFAM" id="SSF53223">
    <property type="entry name" value="Aminoacid dehydrogenase-like, N-terminal domain"/>
    <property type="match status" value="1"/>
</dbReference>
<dbReference type="SUPFAM" id="SSF51735">
    <property type="entry name" value="NAD(P)-binding Rossmann-fold domains"/>
    <property type="match status" value="1"/>
</dbReference>
<dbReference type="PROSITE" id="PS00766">
    <property type="entry name" value="THF_DHG_CYH_1"/>
    <property type="match status" value="1"/>
</dbReference>
<dbReference type="PROSITE" id="PS00767">
    <property type="entry name" value="THF_DHG_CYH_2"/>
    <property type="match status" value="1"/>
</dbReference>